<protein>
    <recommendedName>
        <fullName evidence="1">UPF0260 protein PLES_38831</fullName>
    </recommendedName>
</protein>
<sequence length="149" mass="17235">MAAKVEPFWKRKTLAQLDQDEWESLCDGCGLCCLQKLEDEDDGSVYYTRIACKLLDLQSCRCTNYAERIRFVPDCIQLTPAQADEFQWLPPTCGYRLVAEGKDLPLWHHLVCGDPERVHKERISQSGRMLSETQVAEDDWEDYLIFRAG</sequence>
<comment type="similarity">
    <text evidence="1">Belongs to the UPF0260 family.</text>
</comment>
<name>Y3883_PSEA8</name>
<feature type="chain" id="PRO_1000131626" description="UPF0260 protein PLES_38831">
    <location>
        <begin position="1"/>
        <end position="149"/>
    </location>
</feature>
<proteinExistence type="inferred from homology"/>
<evidence type="ECO:0000255" key="1">
    <source>
        <dbReference type="HAMAP-Rule" id="MF_00676"/>
    </source>
</evidence>
<accession>B7UW21</accession>
<gene>
    <name type="ordered locus">PLES_38831</name>
</gene>
<dbReference type="EMBL" id="FM209186">
    <property type="protein sequence ID" value="CAW28615.1"/>
    <property type="molecule type" value="Genomic_DNA"/>
</dbReference>
<dbReference type="RefSeq" id="WP_003082662.1">
    <property type="nucleotide sequence ID" value="NC_011770.1"/>
</dbReference>
<dbReference type="KEGG" id="pag:PLES_38831"/>
<dbReference type="HOGENOM" id="CLU_109769_0_1_6"/>
<dbReference type="HAMAP" id="MF_00676">
    <property type="entry name" value="UPF0260"/>
    <property type="match status" value="1"/>
</dbReference>
<dbReference type="InterPro" id="IPR005358">
    <property type="entry name" value="Puta_zinc/iron-chelating_dom"/>
</dbReference>
<dbReference type="InterPro" id="IPR008228">
    <property type="entry name" value="UCP006173"/>
</dbReference>
<dbReference type="NCBIfam" id="NF003501">
    <property type="entry name" value="PRK05170.1-5"/>
    <property type="match status" value="1"/>
</dbReference>
<dbReference type="NCBIfam" id="NF003502">
    <property type="entry name" value="PRK05170.1-6"/>
    <property type="match status" value="1"/>
</dbReference>
<dbReference type="NCBIfam" id="NF003507">
    <property type="entry name" value="PRK05170.2-5"/>
    <property type="match status" value="1"/>
</dbReference>
<dbReference type="PANTHER" id="PTHR37421">
    <property type="entry name" value="UPF0260 PROTEIN YCGN"/>
    <property type="match status" value="1"/>
</dbReference>
<dbReference type="PANTHER" id="PTHR37421:SF1">
    <property type="entry name" value="UPF0260 PROTEIN YCGN"/>
    <property type="match status" value="1"/>
</dbReference>
<dbReference type="Pfam" id="PF03692">
    <property type="entry name" value="CxxCxxCC"/>
    <property type="match status" value="1"/>
</dbReference>
<dbReference type="PIRSF" id="PIRSF006173">
    <property type="entry name" value="UCP006173"/>
    <property type="match status" value="1"/>
</dbReference>
<organism>
    <name type="scientific">Pseudomonas aeruginosa (strain LESB58)</name>
    <dbReference type="NCBI Taxonomy" id="557722"/>
    <lineage>
        <taxon>Bacteria</taxon>
        <taxon>Pseudomonadati</taxon>
        <taxon>Pseudomonadota</taxon>
        <taxon>Gammaproteobacteria</taxon>
        <taxon>Pseudomonadales</taxon>
        <taxon>Pseudomonadaceae</taxon>
        <taxon>Pseudomonas</taxon>
    </lineage>
</organism>
<reference key="1">
    <citation type="journal article" date="2009" name="Genome Res.">
        <title>Newly introduced genomic prophage islands are critical determinants of in vivo competitiveness in the Liverpool epidemic strain of Pseudomonas aeruginosa.</title>
        <authorList>
            <person name="Winstanley C."/>
            <person name="Langille M.G.I."/>
            <person name="Fothergill J.L."/>
            <person name="Kukavica-Ibrulj I."/>
            <person name="Paradis-Bleau C."/>
            <person name="Sanschagrin F."/>
            <person name="Thomson N.R."/>
            <person name="Winsor G.L."/>
            <person name="Quail M.A."/>
            <person name="Lennard N."/>
            <person name="Bignell A."/>
            <person name="Clarke L."/>
            <person name="Seeger K."/>
            <person name="Saunders D."/>
            <person name="Harris D."/>
            <person name="Parkhill J."/>
            <person name="Hancock R.E.W."/>
            <person name="Brinkman F.S.L."/>
            <person name="Levesque R.C."/>
        </authorList>
    </citation>
    <scope>NUCLEOTIDE SEQUENCE [LARGE SCALE GENOMIC DNA]</scope>
    <source>
        <strain>LESB58</strain>
    </source>
</reference>